<evidence type="ECO:0000250" key="1"/>
<evidence type="ECO:0000255" key="2">
    <source>
        <dbReference type="PROSITE-ProRule" id="PRU00040"/>
    </source>
</evidence>
<evidence type="ECO:0000256" key="3">
    <source>
        <dbReference type="SAM" id="MobiDB-lite"/>
    </source>
</evidence>
<gene>
    <name type="primary">MBL2</name>
</gene>
<comment type="function">
    <text evidence="1">Calcium-dependent lectin involved in innate immune defense. Binds mannose, fucose and N-acetylglucosamine on different microorganisms and activates the lectin complement pathway. Binds to late apoptotic cells, as well as to apoptotic blebs and to necrotic cells, but not to early apoptotic cells, facilitating their uptake by macrophages (By similarity).</text>
</comment>
<comment type="subunit">
    <text evidence="1">Oligomeric complex of 3 or more homotrimers. Interacts with MASP1 and MASP2 (By similarity). Interacts with MEP1A and MEP1B and may inhibit their catalytic activity (By similarity).</text>
</comment>
<comment type="subcellular location">
    <subcellularLocation>
        <location evidence="1">Secreted</location>
    </subcellularLocation>
</comment>
<comment type="domain">
    <text evidence="1">The coiled-coil domain mediates trimerization.</text>
</comment>
<comment type="PTM">
    <text evidence="1">Hydroxylation on proline residues within the sequence motif, GXPG, is most likely to be 4-hydroxy as this fits the requirement for 4-hydroxylation in vertebrates.</text>
</comment>
<organism>
    <name type="scientific">Pongo pygmaeus</name>
    <name type="common">Bornean orangutan</name>
    <dbReference type="NCBI Taxonomy" id="9600"/>
    <lineage>
        <taxon>Eukaryota</taxon>
        <taxon>Metazoa</taxon>
        <taxon>Chordata</taxon>
        <taxon>Craniata</taxon>
        <taxon>Vertebrata</taxon>
        <taxon>Euteleostomi</taxon>
        <taxon>Mammalia</taxon>
        <taxon>Eutheria</taxon>
        <taxon>Euarchontoglires</taxon>
        <taxon>Primates</taxon>
        <taxon>Haplorrhini</taxon>
        <taxon>Catarrhini</taxon>
        <taxon>Hominidae</taxon>
        <taxon>Pongo</taxon>
    </lineage>
</organism>
<sequence>MSLFPSLPLLLLSVVAASYSETVTCEDAQKTCPAVIACSSPGINGFPGKDGRDGTKGEKGEPGQGLRGLQGPPGKLGPPGNPGPSGSPGPKGQKGDPGKSPDCDSSLAASERKALQTEMARIKKWLTFSLGKQVGNKFFLTNGEIMTFEKVKALCVKFQASVATPRDAAENRAIRNLIKEEAFLGITDEKTEGQFVDLTGNRLTYTNWNEGEPNNAGSDEDCVLLLKNGQWNDIPCSSSHLAVCEFPI</sequence>
<protein>
    <recommendedName>
        <fullName>Mannose-binding protein C</fullName>
        <shortName>MBP-C</shortName>
    </recommendedName>
    <alternativeName>
        <fullName>MBP1</fullName>
    </alternativeName>
    <alternativeName>
        <fullName>Mannan-binding protein</fullName>
    </alternativeName>
    <alternativeName>
        <fullName>Mannose-binding lectin</fullName>
    </alternativeName>
</protein>
<proteinExistence type="inferred from homology"/>
<name>MBL2_PONPY</name>
<reference key="1">
    <citation type="journal article" date="2004" name="Genes Immun.">
        <title>Evolution of the mannose-binding lectin gene in primates.</title>
        <authorList>
            <person name="Verga Falzacappa M.V."/>
            <person name="Segat L."/>
            <person name="Puppini B."/>
            <person name="Amoroso A."/>
            <person name="Crovella S."/>
        </authorList>
    </citation>
    <scope>NUCLEOTIDE SEQUENCE [GENOMIC DNA]</scope>
</reference>
<keyword id="KW-0106">Calcium</keyword>
<keyword id="KW-0175">Coiled coil</keyword>
<keyword id="KW-0176">Collagen</keyword>
<keyword id="KW-1018">Complement activation lectin pathway</keyword>
<keyword id="KW-0180">Complement pathway</keyword>
<keyword id="KW-1015">Disulfide bond</keyword>
<keyword id="KW-0379">Hydroxylation</keyword>
<keyword id="KW-0391">Immunity</keyword>
<keyword id="KW-0399">Innate immunity</keyword>
<keyword id="KW-0430">Lectin</keyword>
<keyword id="KW-0465">Mannose-binding</keyword>
<keyword id="KW-0677">Repeat</keyword>
<keyword id="KW-0964">Secreted</keyword>
<keyword id="KW-0732">Signal</keyword>
<accession>Q66S64</accession>
<feature type="signal peptide" evidence="1">
    <location>
        <begin position="1"/>
        <end position="20"/>
    </location>
</feature>
<feature type="chain" id="PRO_0000017408" description="Mannose-binding protein C">
    <location>
        <begin position="21"/>
        <end position="248"/>
    </location>
</feature>
<feature type="domain" description="Collagen-like">
    <location>
        <begin position="42"/>
        <end position="99"/>
    </location>
</feature>
<feature type="domain" description="C-type lectin" evidence="2">
    <location>
        <begin position="134"/>
        <end position="245"/>
    </location>
</feature>
<feature type="region of interest" description="Disordered" evidence="3">
    <location>
        <begin position="43"/>
        <end position="111"/>
    </location>
</feature>
<feature type="coiled-coil region" evidence="1">
    <location>
        <begin position="112"/>
        <end position="130"/>
    </location>
</feature>
<feature type="compositionally biased region" description="Basic and acidic residues" evidence="3">
    <location>
        <begin position="49"/>
        <end position="61"/>
    </location>
</feature>
<feature type="compositionally biased region" description="Pro residues" evidence="3">
    <location>
        <begin position="75"/>
        <end position="87"/>
    </location>
</feature>
<feature type="compositionally biased region" description="Basic and acidic residues" evidence="3">
    <location>
        <begin position="93"/>
        <end position="102"/>
    </location>
</feature>
<feature type="modified residue" description="4-hydroxyproline" evidence="1">
    <location>
        <position position="47"/>
    </location>
</feature>
<feature type="modified residue" description="4-hydroxyproline" evidence="1">
    <location>
        <position position="73"/>
    </location>
</feature>
<feature type="modified residue" description="4-hydroxyproline" evidence="1">
    <location>
        <position position="79"/>
    </location>
</feature>
<feature type="modified residue" description="4-hydroxyproline" evidence="1">
    <location>
        <position position="82"/>
    </location>
</feature>
<feature type="modified residue" description="4-hydroxyproline" evidence="1">
    <location>
        <position position="88"/>
    </location>
</feature>
<feature type="disulfide bond" evidence="2">
    <location>
        <begin position="155"/>
        <end position="244"/>
    </location>
</feature>
<feature type="disulfide bond" evidence="2">
    <location>
        <begin position="222"/>
        <end position="236"/>
    </location>
</feature>
<dbReference type="EMBL" id="AY707483">
    <property type="protein sequence ID" value="AAU11290.1"/>
    <property type="molecule type" value="Genomic_DNA"/>
</dbReference>
<dbReference type="EMBL" id="AY707480">
    <property type="protein sequence ID" value="AAU11290.1"/>
    <property type="status" value="JOINED"/>
    <property type="molecule type" value="Genomic_DNA"/>
</dbReference>
<dbReference type="EMBL" id="AY707481">
    <property type="protein sequence ID" value="AAU11290.1"/>
    <property type="status" value="JOINED"/>
    <property type="molecule type" value="Genomic_DNA"/>
</dbReference>
<dbReference type="EMBL" id="AY707482">
    <property type="protein sequence ID" value="AAU11290.1"/>
    <property type="status" value="JOINED"/>
    <property type="molecule type" value="Genomic_DNA"/>
</dbReference>
<dbReference type="RefSeq" id="XP_054292514.1">
    <property type="nucleotide sequence ID" value="XM_054436539.2"/>
</dbReference>
<dbReference type="RefSeq" id="XP_054292515.1">
    <property type="nucleotide sequence ID" value="XM_054436540.2"/>
</dbReference>
<dbReference type="SMR" id="Q66S64"/>
<dbReference type="GeneID" id="129006636"/>
<dbReference type="GO" id="GO:0005581">
    <property type="term" value="C:collagen trimer"/>
    <property type="evidence" value="ECO:0007669"/>
    <property type="project" value="UniProtKB-KW"/>
</dbReference>
<dbReference type="GO" id="GO:0005615">
    <property type="term" value="C:extracellular space"/>
    <property type="evidence" value="ECO:0007669"/>
    <property type="project" value="TreeGrafter"/>
</dbReference>
<dbReference type="GO" id="GO:0005771">
    <property type="term" value="C:multivesicular body"/>
    <property type="evidence" value="ECO:0007669"/>
    <property type="project" value="TreeGrafter"/>
</dbReference>
<dbReference type="GO" id="GO:0005537">
    <property type="term" value="F:D-mannose binding"/>
    <property type="evidence" value="ECO:0007669"/>
    <property type="project" value="UniProtKB-KW"/>
</dbReference>
<dbReference type="GO" id="GO:0006958">
    <property type="term" value="P:complement activation, classical pathway"/>
    <property type="evidence" value="ECO:0007669"/>
    <property type="project" value="UniProtKB-KW"/>
</dbReference>
<dbReference type="GO" id="GO:0001867">
    <property type="term" value="P:complement activation, lectin pathway"/>
    <property type="evidence" value="ECO:0007669"/>
    <property type="project" value="UniProtKB-KW"/>
</dbReference>
<dbReference type="CDD" id="cd03591">
    <property type="entry name" value="CLECT_collectin_like"/>
    <property type="match status" value="1"/>
</dbReference>
<dbReference type="FunFam" id="3.10.100.10:FF:000088">
    <property type="entry name" value="Mannose-binding protein A"/>
    <property type="match status" value="1"/>
</dbReference>
<dbReference type="Gene3D" id="3.10.100.10">
    <property type="entry name" value="Mannose-Binding Protein A, subunit A"/>
    <property type="match status" value="1"/>
</dbReference>
<dbReference type="InterPro" id="IPR001304">
    <property type="entry name" value="C-type_lectin-like"/>
</dbReference>
<dbReference type="InterPro" id="IPR016186">
    <property type="entry name" value="C-type_lectin-like/link_sf"/>
</dbReference>
<dbReference type="InterPro" id="IPR018378">
    <property type="entry name" value="C-type_lectin_CS"/>
</dbReference>
<dbReference type="InterPro" id="IPR051077">
    <property type="entry name" value="Ca-dependent_lectin"/>
</dbReference>
<dbReference type="InterPro" id="IPR008160">
    <property type="entry name" value="Collagen"/>
</dbReference>
<dbReference type="InterPro" id="IPR033990">
    <property type="entry name" value="Collectin_CTLD"/>
</dbReference>
<dbReference type="InterPro" id="IPR016187">
    <property type="entry name" value="CTDL_fold"/>
</dbReference>
<dbReference type="PANTHER" id="PTHR24024:SF34">
    <property type="entry name" value="MANNOSE-BINDING PROTEIN C"/>
    <property type="match status" value="1"/>
</dbReference>
<dbReference type="PANTHER" id="PTHR24024">
    <property type="entry name" value="PULMONARY SURFACTANT-ASSOCIATED PROTEIN A"/>
    <property type="match status" value="1"/>
</dbReference>
<dbReference type="Pfam" id="PF01391">
    <property type="entry name" value="Collagen"/>
    <property type="match status" value="1"/>
</dbReference>
<dbReference type="Pfam" id="PF00059">
    <property type="entry name" value="Lectin_C"/>
    <property type="match status" value="1"/>
</dbReference>
<dbReference type="SMART" id="SM00034">
    <property type="entry name" value="CLECT"/>
    <property type="match status" value="1"/>
</dbReference>
<dbReference type="SUPFAM" id="SSF56436">
    <property type="entry name" value="C-type lectin-like"/>
    <property type="match status" value="1"/>
</dbReference>
<dbReference type="SUPFAM" id="SSF57944">
    <property type="entry name" value="Triple coiled coil domain of C-type lectins"/>
    <property type="match status" value="1"/>
</dbReference>
<dbReference type="PROSITE" id="PS00615">
    <property type="entry name" value="C_TYPE_LECTIN_1"/>
    <property type="match status" value="1"/>
</dbReference>
<dbReference type="PROSITE" id="PS50041">
    <property type="entry name" value="C_TYPE_LECTIN_2"/>
    <property type="match status" value="1"/>
</dbReference>